<reference key="1">
    <citation type="journal article" date="1988" name="Virology">
        <title>Analysis of a large cluster of nonessential genes deleted from a vaccinia virus terminal transposition mutant.</title>
        <authorList>
            <person name="Kotwal G.J."/>
            <person name="Moss B."/>
        </authorList>
    </citation>
    <scope>NUCLEOTIDE SEQUENCE [GENOMIC DNA]</scope>
</reference>
<reference key="2">
    <citation type="submission" date="2003-02" db="EMBL/GenBank/DDBJ databases">
        <title>Sequencing of the coding region of Vaccinia-WR to an average 9-fold redundancy and an error rate of 0.16/10kb.</title>
        <authorList>
            <person name="Esposito J.J."/>
            <person name="Frace A.M."/>
            <person name="Sammons S.A."/>
            <person name="Olsen-Rasmussen M."/>
            <person name="Osborne J."/>
            <person name="Wohlhueter R."/>
        </authorList>
    </citation>
    <scope>NUCLEOTIDE SEQUENCE [LARGE SCALE GENOMIC DNA]</scope>
</reference>
<feature type="chain" id="PRO_0000099741" description="Uncharacterized protein 15">
    <location>
        <begin position="1"/>
        <end position="137"/>
    </location>
</feature>
<feature type="sequence conflict" description="In Ref. 1; AAO89294." evidence="1" ref="1">
    <original>LE</original>
    <variation>FQ</variation>
    <location>
        <begin position="46"/>
        <end position="47"/>
    </location>
</feature>
<feature type="sequence conflict" description="In Ref. 1; AAO89294." evidence="1" ref="1">
    <original>ETI</original>
    <variation>KPS</variation>
    <location>
        <begin position="67"/>
        <end position="69"/>
    </location>
</feature>
<accession>P17360</accession>
<accession>Q80HY6</accession>
<name>Y15_VACCW</name>
<sequence length="137" mass="16100">MKGIDNTAYSYIDDLTCCTRVIMADYLNSDYRYNKDVDLDLVKLFLENGKPHGIMCSIVPLWRNDKETIFLILKTMNSDVLQHILIEYMTFGDIPLVEYGTVVNKEAIHEYFRNINIDSYTMKYLLKKEGRCHQLSR</sequence>
<organismHost>
    <name type="scientific">Bos taurus</name>
    <name type="common">Bovine</name>
    <dbReference type="NCBI Taxonomy" id="9913"/>
</organismHost>
<protein>
    <recommendedName>
        <fullName>Uncharacterized protein 15</fullName>
    </recommendedName>
</protein>
<evidence type="ECO:0000305" key="1"/>
<proteinExistence type="predicted"/>
<dbReference type="EMBL" id="M22812">
    <property type="protein sequence ID" value="AAA69595.1"/>
    <property type="status" value="ALT_SEQ"/>
    <property type="molecule type" value="Genomic_DNA"/>
</dbReference>
<dbReference type="EMBL" id="AY243312">
    <property type="protein sequence ID" value="AAO89294.1"/>
    <property type="molecule type" value="Genomic_DNA"/>
</dbReference>
<dbReference type="PIR" id="D31829">
    <property type="entry name" value="WZVZA4"/>
</dbReference>
<dbReference type="RefSeq" id="YP_232897.1">
    <property type="nucleotide sequence ID" value="NC_006998.1"/>
</dbReference>
<dbReference type="DNASU" id="3707630"/>
<dbReference type="GeneID" id="3707630"/>
<dbReference type="KEGG" id="vg:3707630"/>
<dbReference type="Proteomes" id="UP000000344">
    <property type="component" value="Genome"/>
</dbReference>
<comment type="sequence caution" evidence="1">
    <conflict type="miscellaneous discrepancy">
        <sequence resource="EMBL-CDS" id="AAA69595"/>
    </conflict>
    <text>Truncated.</text>
</comment>
<organism>
    <name type="scientific">Vaccinia virus (strain Western Reserve)</name>
    <name type="common">VACV</name>
    <name type="synonym">Vaccinia virus (strain WR)</name>
    <dbReference type="NCBI Taxonomy" id="10254"/>
    <lineage>
        <taxon>Viruses</taxon>
        <taxon>Varidnaviria</taxon>
        <taxon>Bamfordvirae</taxon>
        <taxon>Nucleocytoviricota</taxon>
        <taxon>Pokkesviricetes</taxon>
        <taxon>Chitovirales</taxon>
        <taxon>Poxviridae</taxon>
        <taxon>Chordopoxvirinae</taxon>
        <taxon>Orthopoxvirus</taxon>
        <taxon>Vaccinia virus</taxon>
    </lineage>
</organism>
<keyword id="KW-0244">Early protein</keyword>
<keyword id="KW-1185">Reference proteome</keyword>
<gene>
    <name type="ordered locus">VACWR015</name>
</gene>